<organism>
    <name type="scientific">Azotobacter vinelandii (strain DJ / ATCC BAA-1303)</name>
    <dbReference type="NCBI Taxonomy" id="322710"/>
    <lineage>
        <taxon>Bacteria</taxon>
        <taxon>Pseudomonadati</taxon>
        <taxon>Pseudomonadota</taxon>
        <taxon>Gammaproteobacteria</taxon>
        <taxon>Pseudomonadales</taxon>
        <taxon>Pseudomonadaceae</taxon>
        <taxon>Azotobacter</taxon>
    </lineage>
</organism>
<sequence length="313" mass="34426">MKSGFSHITVLLEEAVDALSIREGGCYLDGTFGRGGHSRLILGRLGAGGILLGFDKDPQAVAAGLALATEDARFVIVQRSFAELADEMKMRGLVGKVSGVLLDLGVSSPQLDDPERGFSFLNDGPLDMRMDPGRGLSAAEWLAQASCEEIAHVFKDYGEERFARRMAQAVVQRRQERPFERTADLAQVLAAANPAWEKGKNPATRAFQGLRIHINNELGDLEQGLDAALEVLEVGGRLAVISFHSLEDRIVKRFMRRQVKGEADKLPRDLPIRPAAFEPRLKLIGKPRYASESELKTNPRARSAIMRVAEKLR</sequence>
<proteinExistence type="inferred from homology"/>
<keyword id="KW-0963">Cytoplasm</keyword>
<keyword id="KW-0489">Methyltransferase</keyword>
<keyword id="KW-0698">rRNA processing</keyword>
<keyword id="KW-0949">S-adenosyl-L-methionine</keyword>
<keyword id="KW-0808">Transferase</keyword>
<name>RSMH_AZOVD</name>
<protein>
    <recommendedName>
        <fullName evidence="1">Ribosomal RNA small subunit methyltransferase H</fullName>
        <ecNumber evidence="1">2.1.1.199</ecNumber>
    </recommendedName>
    <alternativeName>
        <fullName evidence="1">16S rRNA m(4)C1402 methyltransferase</fullName>
    </alternativeName>
    <alternativeName>
        <fullName evidence="1">rRNA (cytosine-N(4)-)-methyltransferase RsmH</fullName>
    </alternativeName>
</protein>
<accession>C1DQ91</accession>
<reference key="1">
    <citation type="journal article" date="2009" name="J. Bacteriol.">
        <title>Genome sequence of Azotobacter vinelandii, an obligate aerobe specialized to support diverse anaerobic metabolic processes.</title>
        <authorList>
            <person name="Setubal J.C."/>
            <person name="Dos Santos P."/>
            <person name="Goldman B.S."/>
            <person name="Ertesvaag H."/>
            <person name="Espin G."/>
            <person name="Rubio L.M."/>
            <person name="Valla S."/>
            <person name="Almeida N.F."/>
            <person name="Balasubramanian D."/>
            <person name="Cromes L."/>
            <person name="Curatti L."/>
            <person name="Du Z."/>
            <person name="Godsy E."/>
            <person name="Goodner B."/>
            <person name="Hellner-Burris K."/>
            <person name="Hernandez J.A."/>
            <person name="Houmiel K."/>
            <person name="Imperial J."/>
            <person name="Kennedy C."/>
            <person name="Larson T.J."/>
            <person name="Latreille P."/>
            <person name="Ligon L.S."/>
            <person name="Lu J."/>
            <person name="Maerk M."/>
            <person name="Miller N.M."/>
            <person name="Norton S."/>
            <person name="O'Carroll I.P."/>
            <person name="Paulsen I."/>
            <person name="Raulfs E.C."/>
            <person name="Roemer R."/>
            <person name="Rosser J."/>
            <person name="Segura D."/>
            <person name="Slater S."/>
            <person name="Stricklin S.L."/>
            <person name="Studholme D.J."/>
            <person name="Sun J."/>
            <person name="Viana C.J."/>
            <person name="Wallin E."/>
            <person name="Wang B."/>
            <person name="Wheeler C."/>
            <person name="Zhu H."/>
            <person name="Dean D.R."/>
            <person name="Dixon R."/>
            <person name="Wood D."/>
        </authorList>
    </citation>
    <scope>NUCLEOTIDE SEQUENCE [LARGE SCALE GENOMIC DNA]</scope>
    <source>
        <strain>DJ / ATCC BAA-1303</strain>
    </source>
</reference>
<feature type="chain" id="PRO_0000386724" description="Ribosomal RNA small subunit methyltransferase H">
    <location>
        <begin position="1"/>
        <end position="313"/>
    </location>
</feature>
<feature type="binding site" evidence="1">
    <location>
        <begin position="35"/>
        <end position="37"/>
    </location>
    <ligand>
        <name>S-adenosyl-L-methionine</name>
        <dbReference type="ChEBI" id="CHEBI:59789"/>
    </ligand>
</feature>
<feature type="binding site" evidence="1">
    <location>
        <position position="55"/>
    </location>
    <ligand>
        <name>S-adenosyl-L-methionine</name>
        <dbReference type="ChEBI" id="CHEBI:59789"/>
    </ligand>
</feature>
<feature type="binding site" evidence="1">
    <location>
        <position position="81"/>
    </location>
    <ligand>
        <name>S-adenosyl-L-methionine</name>
        <dbReference type="ChEBI" id="CHEBI:59789"/>
    </ligand>
</feature>
<feature type="binding site" evidence="1">
    <location>
        <position position="103"/>
    </location>
    <ligand>
        <name>S-adenosyl-L-methionine</name>
        <dbReference type="ChEBI" id="CHEBI:59789"/>
    </ligand>
</feature>
<feature type="binding site" evidence="1">
    <location>
        <position position="110"/>
    </location>
    <ligand>
        <name>S-adenosyl-L-methionine</name>
        <dbReference type="ChEBI" id="CHEBI:59789"/>
    </ligand>
</feature>
<dbReference type="EC" id="2.1.1.199" evidence="1"/>
<dbReference type="EMBL" id="CP001157">
    <property type="protein sequence ID" value="ACO77543.1"/>
    <property type="molecule type" value="Genomic_DNA"/>
</dbReference>
<dbReference type="RefSeq" id="WP_012699963.1">
    <property type="nucleotide sequence ID" value="NC_012560.1"/>
</dbReference>
<dbReference type="SMR" id="C1DQ91"/>
<dbReference type="STRING" id="322710.Avin_13170"/>
<dbReference type="EnsemblBacteria" id="ACO77543">
    <property type="protein sequence ID" value="ACO77543"/>
    <property type="gene ID" value="Avin_13170"/>
</dbReference>
<dbReference type="GeneID" id="88184633"/>
<dbReference type="KEGG" id="avn:Avin_13170"/>
<dbReference type="eggNOG" id="COG0275">
    <property type="taxonomic scope" value="Bacteria"/>
</dbReference>
<dbReference type="HOGENOM" id="CLU_038422_2_0_6"/>
<dbReference type="OrthoDB" id="9806637at2"/>
<dbReference type="Proteomes" id="UP000002424">
    <property type="component" value="Chromosome"/>
</dbReference>
<dbReference type="GO" id="GO:0005737">
    <property type="term" value="C:cytoplasm"/>
    <property type="evidence" value="ECO:0007669"/>
    <property type="project" value="UniProtKB-SubCell"/>
</dbReference>
<dbReference type="GO" id="GO:0071424">
    <property type="term" value="F:rRNA (cytosine-N4-)-methyltransferase activity"/>
    <property type="evidence" value="ECO:0007669"/>
    <property type="project" value="UniProtKB-UniRule"/>
</dbReference>
<dbReference type="GO" id="GO:0070475">
    <property type="term" value="P:rRNA base methylation"/>
    <property type="evidence" value="ECO:0007669"/>
    <property type="project" value="UniProtKB-UniRule"/>
</dbReference>
<dbReference type="FunFam" id="1.10.150.170:FF:000003">
    <property type="entry name" value="Ribosomal RNA small subunit methyltransferase H"/>
    <property type="match status" value="1"/>
</dbReference>
<dbReference type="Gene3D" id="1.10.150.170">
    <property type="entry name" value="Putative methyltransferase TM0872, insert domain"/>
    <property type="match status" value="1"/>
</dbReference>
<dbReference type="Gene3D" id="3.40.50.150">
    <property type="entry name" value="Vaccinia Virus protein VP39"/>
    <property type="match status" value="1"/>
</dbReference>
<dbReference type="HAMAP" id="MF_01007">
    <property type="entry name" value="16SrRNA_methyltr_H"/>
    <property type="match status" value="1"/>
</dbReference>
<dbReference type="InterPro" id="IPR002903">
    <property type="entry name" value="RsmH"/>
</dbReference>
<dbReference type="InterPro" id="IPR023397">
    <property type="entry name" value="SAM-dep_MeTrfase_MraW_recog"/>
</dbReference>
<dbReference type="InterPro" id="IPR029063">
    <property type="entry name" value="SAM-dependent_MTases_sf"/>
</dbReference>
<dbReference type="NCBIfam" id="TIGR00006">
    <property type="entry name" value="16S rRNA (cytosine(1402)-N(4))-methyltransferase RsmH"/>
    <property type="match status" value="1"/>
</dbReference>
<dbReference type="PANTHER" id="PTHR11265:SF0">
    <property type="entry name" value="12S RRNA N4-METHYLCYTIDINE METHYLTRANSFERASE"/>
    <property type="match status" value="1"/>
</dbReference>
<dbReference type="PANTHER" id="PTHR11265">
    <property type="entry name" value="S-ADENOSYL-METHYLTRANSFERASE MRAW"/>
    <property type="match status" value="1"/>
</dbReference>
<dbReference type="Pfam" id="PF01795">
    <property type="entry name" value="Methyltransf_5"/>
    <property type="match status" value="1"/>
</dbReference>
<dbReference type="PIRSF" id="PIRSF004486">
    <property type="entry name" value="MraW"/>
    <property type="match status" value="1"/>
</dbReference>
<dbReference type="SUPFAM" id="SSF81799">
    <property type="entry name" value="Putative methyltransferase TM0872, insert domain"/>
    <property type="match status" value="1"/>
</dbReference>
<dbReference type="SUPFAM" id="SSF53335">
    <property type="entry name" value="S-adenosyl-L-methionine-dependent methyltransferases"/>
    <property type="match status" value="1"/>
</dbReference>
<gene>
    <name evidence="1" type="primary">rsmH</name>
    <name type="synonym">mraW</name>
    <name type="ordered locus">Avin_13170</name>
</gene>
<evidence type="ECO:0000255" key="1">
    <source>
        <dbReference type="HAMAP-Rule" id="MF_01007"/>
    </source>
</evidence>
<comment type="function">
    <text evidence="1">Specifically methylates the N4 position of cytidine in position 1402 (C1402) of 16S rRNA.</text>
</comment>
<comment type="catalytic activity">
    <reaction evidence="1">
        <text>cytidine(1402) in 16S rRNA + S-adenosyl-L-methionine = N(4)-methylcytidine(1402) in 16S rRNA + S-adenosyl-L-homocysteine + H(+)</text>
        <dbReference type="Rhea" id="RHEA:42928"/>
        <dbReference type="Rhea" id="RHEA-COMP:10286"/>
        <dbReference type="Rhea" id="RHEA-COMP:10287"/>
        <dbReference type="ChEBI" id="CHEBI:15378"/>
        <dbReference type="ChEBI" id="CHEBI:57856"/>
        <dbReference type="ChEBI" id="CHEBI:59789"/>
        <dbReference type="ChEBI" id="CHEBI:74506"/>
        <dbReference type="ChEBI" id="CHEBI:82748"/>
        <dbReference type="EC" id="2.1.1.199"/>
    </reaction>
</comment>
<comment type="subcellular location">
    <subcellularLocation>
        <location evidence="1">Cytoplasm</location>
    </subcellularLocation>
</comment>
<comment type="similarity">
    <text evidence="1">Belongs to the methyltransferase superfamily. RsmH family.</text>
</comment>